<reference key="1">
    <citation type="journal article" date="2002" name="Proc. Natl. Acad. Sci. U.S.A.">
        <title>Extensive mosaic structure revealed by the complete genome sequence of uropathogenic Escherichia coli.</title>
        <authorList>
            <person name="Welch R.A."/>
            <person name="Burland V."/>
            <person name="Plunkett G. III"/>
            <person name="Redford P."/>
            <person name="Roesch P."/>
            <person name="Rasko D."/>
            <person name="Buckles E.L."/>
            <person name="Liou S.-R."/>
            <person name="Boutin A."/>
            <person name="Hackett J."/>
            <person name="Stroud D."/>
            <person name="Mayhew G.F."/>
            <person name="Rose D.J."/>
            <person name="Zhou S."/>
            <person name="Schwartz D.C."/>
            <person name="Perna N.T."/>
            <person name="Mobley H.L.T."/>
            <person name="Donnenberg M.S."/>
            <person name="Blattner F.R."/>
        </authorList>
    </citation>
    <scope>NUCLEOTIDE SEQUENCE [LARGE SCALE GENOMIC DNA]</scope>
    <source>
        <strain>CFT073 / ATCC 700928 / UPEC</strain>
    </source>
</reference>
<proteinExistence type="inferred from homology"/>
<keyword id="KW-0046">Antibiotic resistance</keyword>
<keyword id="KW-0441">Lipid A biosynthesis</keyword>
<keyword id="KW-0444">Lipid biosynthesis</keyword>
<keyword id="KW-0443">Lipid metabolism</keyword>
<keyword id="KW-0448">Lipopolysaccharide biosynthesis</keyword>
<keyword id="KW-0511">Multifunctional enzyme</keyword>
<keyword id="KW-0520">NAD</keyword>
<keyword id="KW-0560">Oxidoreductase</keyword>
<keyword id="KW-1185">Reference proteome</keyword>
<keyword id="KW-0808">Transferase</keyword>
<sequence>MKTVVFAYHDMGCLGIEALLAAGYEISAIFTHTDNPGEKAFYGSVARLAAERGIPVYAPDNVNHPLWVERIAQLSPEVIFSFYYRHLICDEILQLAPRGAFNLHGSLLPKYRGRAPLNWVLVNGETETGVTLHRMVKRADAGAIVAQLRVAIAPDDIAITLHHKLCHAARQLLEQTLPAIKHGNILEIAQRENEATCFGRRTPDDSFLEWHKSASVLHNMVRAVADPWPGAFSYVGNQKFTVWSSRVHPHASKAQPGSVISVAPLLIACGDGALEIVTGQAGDGITMQGSQLAQTLGLVQGSRLNSQPACAARRRTRVLILGVNGFIGNHLTERLLREDHYEVYGLDIGSDAISRFMNHPHFHFVEGDISIHSEWIEYHVKKCDVVLPLVAIATPIEYTRNPLRVFELDFEENLRIIRYCVKYRKRIIFPSTSEVYGMCSDKYFDEDHSNLIVGPVNKPRWIYSVSKQLLDRVIWAYGEKEGLQFTLFRPFNWMGPRLDNLNAARIGSSRAITQLILNLVEGSPIKLIDGGKQKRCFTDIRDGIEALYRIIENAGNRCDGEIINIGNPENEASIEELGEMLLASFEKHPLRHYFPPFAGFRVVESSSYYGKGYQDVEHRKPSIRNARRCLDWEPKIDMQETIDETLDFFLRTVDLTDKPS</sequence>
<gene>
    <name evidence="1" type="primary">arnA</name>
    <name type="ordered locus">c2797</name>
</gene>
<organism>
    <name type="scientific">Escherichia coli O6:H1 (strain CFT073 / ATCC 700928 / UPEC)</name>
    <dbReference type="NCBI Taxonomy" id="199310"/>
    <lineage>
        <taxon>Bacteria</taxon>
        <taxon>Pseudomonadati</taxon>
        <taxon>Pseudomonadota</taxon>
        <taxon>Gammaproteobacteria</taxon>
        <taxon>Enterobacterales</taxon>
        <taxon>Enterobacteriaceae</taxon>
        <taxon>Escherichia</taxon>
    </lineage>
</organism>
<protein>
    <recommendedName>
        <fullName evidence="1">Bifunctional polymyxin resistance protein ArnA</fullName>
    </recommendedName>
    <domain>
        <recommendedName>
            <fullName evidence="1">UDP-4-amino-4-deoxy-L-arabinose formyltransferase</fullName>
            <ecNumber evidence="1">2.1.2.13</ecNumber>
        </recommendedName>
        <alternativeName>
            <fullName evidence="1">ArnAFT</fullName>
        </alternativeName>
        <alternativeName>
            <fullName evidence="1">UDP-L-Ara4N formyltransferase</fullName>
        </alternativeName>
    </domain>
    <domain>
        <recommendedName>
            <fullName evidence="1">UDP-glucuronic acid oxidase, UDP-4-keto-hexauronic acid decarboxylating</fullName>
            <ecNumber evidence="1">1.1.1.305</ecNumber>
        </recommendedName>
        <alternativeName>
            <fullName evidence="1">ArnADH</fullName>
        </alternativeName>
        <alternativeName>
            <fullName evidence="1">UDP-GlcUA decarboxylase</fullName>
        </alternativeName>
        <alternativeName>
            <fullName evidence="1">UDP-glucuronic acid dehydrogenase</fullName>
        </alternativeName>
    </domain>
</protein>
<comment type="function">
    <text evidence="1">Bifunctional enzyme that catalyzes the oxidative decarboxylation of UDP-glucuronic acid (UDP-GlcUA) to UDP-4-keto-arabinose (UDP-Ara4O) and the addition of a formyl group to UDP-4-amino-4-deoxy-L-arabinose (UDP-L-Ara4N) to form UDP-L-4-formamido-arabinose (UDP-L-Ara4FN). The modified arabinose is attached to lipid A and is required for resistance to polymyxin and cationic antimicrobial peptides.</text>
</comment>
<comment type="catalytic activity">
    <reaction evidence="1">
        <text>UDP-alpha-D-glucuronate + NAD(+) = UDP-beta-L-threo-pentopyranos-4-ulose + CO2 + NADH</text>
        <dbReference type="Rhea" id="RHEA:24702"/>
        <dbReference type="ChEBI" id="CHEBI:16526"/>
        <dbReference type="ChEBI" id="CHEBI:57540"/>
        <dbReference type="ChEBI" id="CHEBI:57945"/>
        <dbReference type="ChEBI" id="CHEBI:58052"/>
        <dbReference type="ChEBI" id="CHEBI:58710"/>
        <dbReference type="EC" id="1.1.1.305"/>
    </reaction>
</comment>
<comment type="catalytic activity">
    <reaction evidence="1">
        <text>UDP-4-amino-4-deoxy-beta-L-arabinose + (6R)-10-formyltetrahydrofolate = UDP-4-deoxy-4-formamido-beta-L-arabinose + (6S)-5,6,7,8-tetrahydrofolate + H(+)</text>
        <dbReference type="Rhea" id="RHEA:24706"/>
        <dbReference type="ChEBI" id="CHEBI:15378"/>
        <dbReference type="ChEBI" id="CHEBI:57453"/>
        <dbReference type="ChEBI" id="CHEBI:58708"/>
        <dbReference type="ChEBI" id="CHEBI:58709"/>
        <dbReference type="ChEBI" id="CHEBI:195366"/>
        <dbReference type="EC" id="2.1.2.13"/>
    </reaction>
</comment>
<comment type="pathway">
    <text evidence="1">Nucleotide-sugar biosynthesis; UDP-4-deoxy-4-formamido-beta-L-arabinose biosynthesis; UDP-4-deoxy-4-formamido-beta-L-arabinose from UDP-alpha-D-glucuronate: step 1/3.</text>
</comment>
<comment type="pathway">
    <text evidence="1">Nucleotide-sugar biosynthesis; UDP-4-deoxy-4-formamido-beta-L-arabinose biosynthesis; UDP-4-deoxy-4-formamido-beta-L-arabinose from UDP-alpha-D-glucuronate: step 3/3.</text>
</comment>
<comment type="pathway">
    <text evidence="1">Bacterial outer membrane biogenesis; lipopolysaccharide biosynthesis.</text>
</comment>
<comment type="subunit">
    <text evidence="1">Homohexamer, formed by a dimer of trimers.</text>
</comment>
<comment type="similarity">
    <text evidence="1">In the N-terminal section; belongs to the Fmt family. UDP-L-Ara4N formyltransferase subfamily.</text>
</comment>
<comment type="similarity">
    <text evidence="1">In the C-terminal section; belongs to the NAD(P)-dependent epimerase/dehydratase family. UDP-glucuronic acid decarboxylase subfamily.</text>
</comment>
<feature type="chain" id="PRO_0000083100" description="Bifunctional polymyxin resistance protein ArnA">
    <location>
        <begin position="1"/>
        <end position="660"/>
    </location>
</feature>
<feature type="region of interest" description="Formyltransferase ArnAFT">
    <location>
        <begin position="1"/>
        <end position="304"/>
    </location>
</feature>
<feature type="region of interest" description="Dehydrogenase ArnADH">
    <location>
        <begin position="314"/>
        <end position="660"/>
    </location>
</feature>
<feature type="active site" description="Proton donor; for formyltransferase activity" evidence="1">
    <location>
        <position position="104"/>
    </location>
</feature>
<feature type="active site" description="Proton acceptor; for decarboxylase activity" evidence="1">
    <location>
        <position position="434"/>
    </location>
</feature>
<feature type="active site" description="Proton donor; for decarboxylase activity" evidence="1">
    <location>
        <position position="619"/>
    </location>
</feature>
<feature type="binding site" evidence="1">
    <location>
        <begin position="86"/>
        <end position="88"/>
    </location>
    <ligand>
        <name>(6R)-10-formyltetrahydrofolate</name>
        <dbReference type="ChEBI" id="CHEBI:195366"/>
    </ligand>
</feature>
<feature type="binding site" evidence="1">
    <location>
        <position position="114"/>
    </location>
    <ligand>
        <name>(6R)-10-formyltetrahydrofolate</name>
        <dbReference type="ChEBI" id="CHEBI:195366"/>
    </ligand>
</feature>
<feature type="binding site" evidence="1">
    <location>
        <begin position="136"/>
        <end position="140"/>
    </location>
    <ligand>
        <name>(6R)-10-formyltetrahydrofolate</name>
        <dbReference type="ChEBI" id="CHEBI:195366"/>
    </ligand>
</feature>
<feature type="binding site" evidence="1">
    <location>
        <position position="347"/>
    </location>
    <ligand>
        <name>NAD(+)</name>
        <dbReference type="ChEBI" id="CHEBI:57540"/>
    </ligand>
</feature>
<feature type="binding site" evidence="1">
    <location>
        <begin position="368"/>
        <end position="369"/>
    </location>
    <ligand>
        <name>NAD(+)</name>
        <dbReference type="ChEBI" id="CHEBI:57540"/>
    </ligand>
</feature>
<feature type="binding site" evidence="1">
    <location>
        <position position="393"/>
    </location>
    <ligand>
        <name>UDP-alpha-D-glucuronate</name>
        <dbReference type="ChEBI" id="CHEBI:58052"/>
    </ligand>
</feature>
<feature type="binding site" evidence="1">
    <location>
        <position position="398"/>
    </location>
    <ligand>
        <name>UDP-alpha-D-glucuronate</name>
        <dbReference type="ChEBI" id="CHEBI:58052"/>
    </ligand>
</feature>
<feature type="binding site" evidence="1">
    <location>
        <begin position="432"/>
        <end position="433"/>
    </location>
    <ligand>
        <name>UDP-alpha-D-glucuronate</name>
        <dbReference type="ChEBI" id="CHEBI:58052"/>
    </ligand>
</feature>
<feature type="binding site" evidence="1">
    <location>
        <position position="460"/>
    </location>
    <ligand>
        <name>UDP-alpha-D-glucuronate</name>
        <dbReference type="ChEBI" id="CHEBI:58052"/>
    </ligand>
</feature>
<feature type="binding site" evidence="1">
    <location>
        <position position="492"/>
    </location>
    <ligand>
        <name>UDP-alpha-D-glucuronate</name>
        <dbReference type="ChEBI" id="CHEBI:58052"/>
    </ligand>
</feature>
<feature type="binding site" evidence="1">
    <location>
        <begin position="526"/>
        <end position="535"/>
    </location>
    <ligand>
        <name>UDP-alpha-D-glucuronate</name>
        <dbReference type="ChEBI" id="CHEBI:58052"/>
    </ligand>
</feature>
<feature type="binding site" evidence="1">
    <location>
        <position position="613"/>
    </location>
    <ligand>
        <name>UDP-alpha-D-glucuronate</name>
        <dbReference type="ChEBI" id="CHEBI:58052"/>
    </ligand>
</feature>
<feature type="site" description="Transition state stabilizer" evidence="1">
    <location>
        <position position="102"/>
    </location>
</feature>
<feature type="site" description="Raises pKa of active site His" evidence="1">
    <location>
        <position position="140"/>
    </location>
</feature>
<accession>Q8FFM1</accession>
<name>ARNA_ECOL6</name>
<evidence type="ECO:0000255" key="1">
    <source>
        <dbReference type="HAMAP-Rule" id="MF_01166"/>
    </source>
</evidence>
<dbReference type="EC" id="2.1.2.13" evidence="1"/>
<dbReference type="EC" id="1.1.1.305" evidence="1"/>
<dbReference type="EMBL" id="AE014075">
    <property type="protein sequence ID" value="AAN81251.1"/>
    <property type="molecule type" value="Genomic_DNA"/>
</dbReference>
<dbReference type="RefSeq" id="WP_000860296.1">
    <property type="nucleotide sequence ID" value="NZ_CP051263.1"/>
</dbReference>
<dbReference type="SMR" id="Q8FFM1"/>
<dbReference type="STRING" id="199310.c2797"/>
<dbReference type="KEGG" id="ecc:c2797"/>
<dbReference type="eggNOG" id="COG0223">
    <property type="taxonomic scope" value="Bacteria"/>
</dbReference>
<dbReference type="eggNOG" id="COG0451">
    <property type="taxonomic scope" value="Bacteria"/>
</dbReference>
<dbReference type="HOGENOM" id="CLU_007383_23_2_6"/>
<dbReference type="BioCyc" id="ECOL199310:C2797-MONOMER"/>
<dbReference type="UniPathway" id="UPA00030"/>
<dbReference type="UniPathway" id="UPA00032">
    <property type="reaction ID" value="UER00492"/>
</dbReference>
<dbReference type="UniPathway" id="UPA00032">
    <property type="reaction ID" value="UER00494"/>
</dbReference>
<dbReference type="Proteomes" id="UP000001410">
    <property type="component" value="Chromosome"/>
</dbReference>
<dbReference type="GO" id="GO:0016020">
    <property type="term" value="C:membrane"/>
    <property type="evidence" value="ECO:0007669"/>
    <property type="project" value="GOC"/>
</dbReference>
<dbReference type="GO" id="GO:0016831">
    <property type="term" value="F:carboxy-lyase activity"/>
    <property type="evidence" value="ECO:0007669"/>
    <property type="project" value="InterPro"/>
</dbReference>
<dbReference type="GO" id="GO:0099619">
    <property type="term" value="F:UDP-4-amino-4-deoxy-L-arabinose formyltransferase activity"/>
    <property type="evidence" value="ECO:0007669"/>
    <property type="project" value="UniProtKB-EC"/>
</dbReference>
<dbReference type="GO" id="GO:0099618">
    <property type="term" value="F:UDP-glucuronate dehydrogenase activity"/>
    <property type="evidence" value="ECO:0007669"/>
    <property type="project" value="UniProtKB-EC"/>
</dbReference>
<dbReference type="GO" id="GO:0009245">
    <property type="term" value="P:lipid A biosynthetic process"/>
    <property type="evidence" value="ECO:0007669"/>
    <property type="project" value="UniProtKB-KW"/>
</dbReference>
<dbReference type="GO" id="GO:0009103">
    <property type="term" value="P:lipopolysaccharide biosynthetic process"/>
    <property type="evidence" value="ECO:0007669"/>
    <property type="project" value="UniProtKB-UniRule"/>
</dbReference>
<dbReference type="GO" id="GO:0046677">
    <property type="term" value="P:response to antibiotic"/>
    <property type="evidence" value="ECO:0007669"/>
    <property type="project" value="UniProtKB-KW"/>
</dbReference>
<dbReference type="CDD" id="cd08702">
    <property type="entry name" value="Arna_FMT_C"/>
    <property type="match status" value="1"/>
</dbReference>
<dbReference type="CDD" id="cd05257">
    <property type="entry name" value="Arna_like_SDR_e"/>
    <property type="match status" value="1"/>
</dbReference>
<dbReference type="CDD" id="cd08644">
    <property type="entry name" value="FMT_core_ArnA_N"/>
    <property type="match status" value="1"/>
</dbReference>
<dbReference type="FunFam" id="3.40.50.12230:FF:000002">
    <property type="entry name" value="Bifunctional polymyxin resistance protein ArnA"/>
    <property type="match status" value="1"/>
</dbReference>
<dbReference type="FunFam" id="3.40.50.720:FF:000197">
    <property type="entry name" value="Bifunctional polymyxin resistance protein ArnA"/>
    <property type="match status" value="1"/>
</dbReference>
<dbReference type="Gene3D" id="3.40.50.12230">
    <property type="match status" value="1"/>
</dbReference>
<dbReference type="Gene3D" id="3.40.50.720">
    <property type="entry name" value="NAD(P)-binding Rossmann-like Domain"/>
    <property type="match status" value="1"/>
</dbReference>
<dbReference type="HAMAP" id="MF_01166">
    <property type="entry name" value="ArnA"/>
    <property type="match status" value="1"/>
</dbReference>
<dbReference type="InterPro" id="IPR045869">
    <property type="entry name" value="Arna-like_SDR_e"/>
</dbReference>
<dbReference type="InterPro" id="IPR021168">
    <property type="entry name" value="Bifun_polymyxin_resist_ArnA"/>
</dbReference>
<dbReference type="InterPro" id="IPR001509">
    <property type="entry name" value="Epimerase_deHydtase"/>
</dbReference>
<dbReference type="InterPro" id="IPR005793">
    <property type="entry name" value="Formyl_trans_C"/>
</dbReference>
<dbReference type="InterPro" id="IPR002376">
    <property type="entry name" value="Formyl_transf_N"/>
</dbReference>
<dbReference type="InterPro" id="IPR036477">
    <property type="entry name" value="Formyl_transf_N_sf"/>
</dbReference>
<dbReference type="InterPro" id="IPR011034">
    <property type="entry name" value="Formyl_transferase-like_C_sf"/>
</dbReference>
<dbReference type="InterPro" id="IPR050177">
    <property type="entry name" value="Lipid_A_modif_metabolic_enz"/>
</dbReference>
<dbReference type="InterPro" id="IPR036291">
    <property type="entry name" value="NAD(P)-bd_dom_sf"/>
</dbReference>
<dbReference type="NCBIfam" id="NF005414">
    <property type="entry name" value="PRK06988.1"/>
    <property type="match status" value="1"/>
</dbReference>
<dbReference type="NCBIfam" id="NF005998">
    <property type="entry name" value="PRK08125.1"/>
    <property type="match status" value="1"/>
</dbReference>
<dbReference type="NCBIfam" id="NF008872">
    <property type="entry name" value="PRK11908.1"/>
    <property type="match status" value="1"/>
</dbReference>
<dbReference type="PANTHER" id="PTHR43245">
    <property type="entry name" value="BIFUNCTIONAL POLYMYXIN RESISTANCE PROTEIN ARNA"/>
    <property type="match status" value="1"/>
</dbReference>
<dbReference type="PANTHER" id="PTHR43245:SF13">
    <property type="entry name" value="UDP-D-APIOSE_UDP-D-XYLOSE SYNTHASE 2"/>
    <property type="match status" value="1"/>
</dbReference>
<dbReference type="Pfam" id="PF01370">
    <property type="entry name" value="Epimerase"/>
    <property type="match status" value="1"/>
</dbReference>
<dbReference type="Pfam" id="PF02911">
    <property type="entry name" value="Formyl_trans_C"/>
    <property type="match status" value="1"/>
</dbReference>
<dbReference type="Pfam" id="PF00551">
    <property type="entry name" value="Formyl_trans_N"/>
    <property type="match status" value="1"/>
</dbReference>
<dbReference type="PIRSF" id="PIRSF036506">
    <property type="entry name" value="Bifun_polymyxin_resist_ArnA"/>
    <property type="match status" value="1"/>
</dbReference>
<dbReference type="SUPFAM" id="SSF50486">
    <property type="entry name" value="FMT C-terminal domain-like"/>
    <property type="match status" value="1"/>
</dbReference>
<dbReference type="SUPFAM" id="SSF53328">
    <property type="entry name" value="Formyltransferase"/>
    <property type="match status" value="1"/>
</dbReference>
<dbReference type="SUPFAM" id="SSF51735">
    <property type="entry name" value="NAD(P)-binding Rossmann-fold domains"/>
    <property type="match status" value="1"/>
</dbReference>